<organism>
    <name type="scientific">Salmonella typhimurium (strain LT2 / SGSC1412 / ATCC 700720)</name>
    <dbReference type="NCBI Taxonomy" id="99287"/>
    <lineage>
        <taxon>Bacteria</taxon>
        <taxon>Pseudomonadati</taxon>
        <taxon>Pseudomonadota</taxon>
        <taxon>Gammaproteobacteria</taxon>
        <taxon>Enterobacterales</taxon>
        <taxon>Enterobacteriaceae</taxon>
        <taxon>Salmonella</taxon>
    </lineage>
</organism>
<accession>P65510</accession>
<accession>Q8XGW1</accession>
<sequence>MSQPAKVLLLYAHPESQDSVANRVLLKPAIQHNNVTVHDLYARYPDFFIDTPYEQALLREHDVIVFQHPLYTYSCPALLKEWLDRVLSRGFASGPGGNQLVGKYWRSVITTGEPESAYRYDALNRYPMSDVLRPFELTAAMCRMHWMPPIIVYWARRQSPQTLASHAKAYGEWLANPVSAGGY</sequence>
<gene>
    <name evidence="1" type="primary">kefG</name>
    <name type="ordered locus">STM3458</name>
</gene>
<feature type="chain" id="PRO_0000071648" description="Glutathione-regulated potassium-efflux system ancillary protein KefG">
    <location>
        <begin position="1"/>
        <end position="183"/>
    </location>
</feature>
<dbReference type="EC" id="1.6.5.2" evidence="1"/>
<dbReference type="EMBL" id="AE006468">
    <property type="protein sequence ID" value="AAL22321.1"/>
    <property type="molecule type" value="Genomic_DNA"/>
</dbReference>
<dbReference type="RefSeq" id="WP_000081820.1">
    <property type="nucleotide sequence ID" value="NC_003197.2"/>
</dbReference>
<dbReference type="SMR" id="P65510"/>
<dbReference type="STRING" id="99287.STM3458"/>
<dbReference type="PaxDb" id="99287-STM3458"/>
<dbReference type="KEGG" id="stm:STM3458"/>
<dbReference type="PATRIC" id="fig|99287.12.peg.3655"/>
<dbReference type="HOGENOM" id="CLU_058643_0_1_6"/>
<dbReference type="OMA" id="RYPMSDI"/>
<dbReference type="PhylomeDB" id="P65510"/>
<dbReference type="BioCyc" id="SENT99287:STM3458-MONOMER"/>
<dbReference type="Proteomes" id="UP000001014">
    <property type="component" value="Chromosome"/>
</dbReference>
<dbReference type="GO" id="GO:0005886">
    <property type="term" value="C:plasma membrane"/>
    <property type="evidence" value="ECO:0007669"/>
    <property type="project" value="UniProtKB-SubCell"/>
</dbReference>
<dbReference type="GO" id="GO:0009055">
    <property type="term" value="F:electron transfer activity"/>
    <property type="evidence" value="ECO:0000318"/>
    <property type="project" value="GO_Central"/>
</dbReference>
<dbReference type="GO" id="GO:0010181">
    <property type="term" value="F:FMN binding"/>
    <property type="evidence" value="ECO:0000318"/>
    <property type="project" value="GO_Central"/>
</dbReference>
<dbReference type="GO" id="GO:0003955">
    <property type="term" value="F:NAD(P)H dehydrogenase (quinone) activity"/>
    <property type="evidence" value="ECO:0000318"/>
    <property type="project" value="GO_Central"/>
</dbReference>
<dbReference type="GO" id="GO:0050136">
    <property type="term" value="F:NADH:ubiquinone reductase (non-electrogenic) activity"/>
    <property type="evidence" value="ECO:0007669"/>
    <property type="project" value="RHEA"/>
</dbReference>
<dbReference type="GO" id="GO:0008753">
    <property type="term" value="F:NADPH dehydrogenase (quinone) activity"/>
    <property type="evidence" value="ECO:0007669"/>
    <property type="project" value="RHEA"/>
</dbReference>
<dbReference type="GO" id="GO:1901381">
    <property type="term" value="P:positive regulation of potassium ion transmembrane transport"/>
    <property type="evidence" value="ECO:0007669"/>
    <property type="project" value="UniProtKB-UniRule"/>
</dbReference>
<dbReference type="GO" id="GO:0006813">
    <property type="term" value="P:potassium ion transport"/>
    <property type="evidence" value="ECO:0007669"/>
    <property type="project" value="InterPro"/>
</dbReference>
<dbReference type="FunFam" id="3.40.50.360:FF:000013">
    <property type="entry name" value="Glutathione-regulated potassium-efflux system ancillary protein KefG"/>
    <property type="match status" value="1"/>
</dbReference>
<dbReference type="Gene3D" id="3.40.50.360">
    <property type="match status" value="1"/>
</dbReference>
<dbReference type="HAMAP" id="MF_01415">
    <property type="entry name" value="K_H_efflux_KefG"/>
    <property type="match status" value="1"/>
</dbReference>
<dbReference type="InterPro" id="IPR003680">
    <property type="entry name" value="Flavodoxin_fold"/>
</dbReference>
<dbReference type="InterPro" id="IPR029039">
    <property type="entry name" value="Flavoprotein-like_sf"/>
</dbReference>
<dbReference type="InterPro" id="IPR023947">
    <property type="entry name" value="K_H_efflux_KefG"/>
</dbReference>
<dbReference type="InterPro" id="IPR046980">
    <property type="entry name" value="KefG/KefF"/>
</dbReference>
<dbReference type="NCBIfam" id="NF003430">
    <property type="entry name" value="PRK04930.1"/>
    <property type="match status" value="1"/>
</dbReference>
<dbReference type="PANTHER" id="PTHR47307">
    <property type="entry name" value="GLUTATHIONE-REGULATED POTASSIUM-EFFLUX SYSTEM ANCILLARY PROTEIN KEFG"/>
    <property type="match status" value="1"/>
</dbReference>
<dbReference type="PANTHER" id="PTHR47307:SF1">
    <property type="entry name" value="GLUTATHIONE-REGULATED POTASSIUM-EFFLUX SYSTEM ANCILLARY PROTEIN KEFG"/>
    <property type="match status" value="1"/>
</dbReference>
<dbReference type="Pfam" id="PF02525">
    <property type="entry name" value="Flavodoxin_2"/>
    <property type="match status" value="1"/>
</dbReference>
<dbReference type="SUPFAM" id="SSF52218">
    <property type="entry name" value="Flavoproteins"/>
    <property type="match status" value="1"/>
</dbReference>
<reference key="1">
    <citation type="journal article" date="2001" name="Nature">
        <title>Complete genome sequence of Salmonella enterica serovar Typhimurium LT2.</title>
        <authorList>
            <person name="McClelland M."/>
            <person name="Sanderson K.E."/>
            <person name="Spieth J."/>
            <person name="Clifton S.W."/>
            <person name="Latreille P."/>
            <person name="Courtney L."/>
            <person name="Porwollik S."/>
            <person name="Ali J."/>
            <person name="Dante M."/>
            <person name="Du F."/>
            <person name="Hou S."/>
            <person name="Layman D."/>
            <person name="Leonard S."/>
            <person name="Nguyen C."/>
            <person name="Scott K."/>
            <person name="Holmes A."/>
            <person name="Grewal N."/>
            <person name="Mulvaney E."/>
            <person name="Ryan E."/>
            <person name="Sun H."/>
            <person name="Florea L."/>
            <person name="Miller W."/>
            <person name="Stoneking T."/>
            <person name="Nhan M."/>
            <person name="Waterston R."/>
            <person name="Wilson R.K."/>
        </authorList>
    </citation>
    <scope>NUCLEOTIDE SEQUENCE [LARGE SCALE GENOMIC DNA]</scope>
    <source>
        <strain>LT2 / SGSC1412 / ATCC 700720</strain>
    </source>
</reference>
<keyword id="KW-0997">Cell inner membrane</keyword>
<keyword id="KW-1003">Cell membrane</keyword>
<keyword id="KW-0472">Membrane</keyword>
<keyword id="KW-0520">NAD</keyword>
<keyword id="KW-0560">Oxidoreductase</keyword>
<keyword id="KW-1185">Reference proteome</keyword>
<name>KEFG_SALTY</name>
<evidence type="ECO:0000255" key="1">
    <source>
        <dbReference type="HAMAP-Rule" id="MF_01415"/>
    </source>
</evidence>
<proteinExistence type="inferred from homology"/>
<protein>
    <recommendedName>
        <fullName evidence="1">Glutathione-regulated potassium-efflux system ancillary protein KefG</fullName>
    </recommendedName>
    <alternativeName>
        <fullName evidence="1">Putative quinone oxidoreductase KefG</fullName>
        <ecNumber evidence="1">1.6.5.2</ecNumber>
    </alternativeName>
</protein>
<comment type="function">
    <text evidence="1">Regulatory subunit of a potassium efflux system that confers protection against electrophiles. Required for full activity of KefB.</text>
</comment>
<comment type="catalytic activity">
    <reaction evidence="1">
        <text>a quinone + NADH + H(+) = a quinol + NAD(+)</text>
        <dbReference type="Rhea" id="RHEA:46160"/>
        <dbReference type="ChEBI" id="CHEBI:15378"/>
        <dbReference type="ChEBI" id="CHEBI:24646"/>
        <dbReference type="ChEBI" id="CHEBI:57540"/>
        <dbReference type="ChEBI" id="CHEBI:57945"/>
        <dbReference type="ChEBI" id="CHEBI:132124"/>
        <dbReference type="EC" id="1.6.5.2"/>
    </reaction>
</comment>
<comment type="catalytic activity">
    <reaction evidence="1">
        <text>a quinone + NADPH + H(+) = a quinol + NADP(+)</text>
        <dbReference type="Rhea" id="RHEA:46164"/>
        <dbReference type="ChEBI" id="CHEBI:15378"/>
        <dbReference type="ChEBI" id="CHEBI:24646"/>
        <dbReference type="ChEBI" id="CHEBI:57783"/>
        <dbReference type="ChEBI" id="CHEBI:58349"/>
        <dbReference type="ChEBI" id="CHEBI:132124"/>
        <dbReference type="EC" id="1.6.5.2"/>
    </reaction>
</comment>
<comment type="subunit">
    <text evidence="1">Interacts with KefB.</text>
</comment>
<comment type="subcellular location">
    <subcellularLocation>
        <location evidence="1">Cell inner membrane</location>
        <topology evidence="1">Peripheral membrane protein</topology>
        <orientation evidence="1">Cytoplasmic side</orientation>
    </subcellularLocation>
</comment>
<comment type="similarity">
    <text evidence="1">Belongs to the NAD(P)H dehydrogenase (quinone) family. KefG subfamily.</text>
</comment>